<organism>
    <name type="scientific">Streptococcus pneumoniae serotype 4 (strain ATCC BAA-334 / TIGR4)</name>
    <dbReference type="NCBI Taxonomy" id="170187"/>
    <lineage>
        <taxon>Bacteria</taxon>
        <taxon>Bacillati</taxon>
        <taxon>Bacillota</taxon>
        <taxon>Bacilli</taxon>
        <taxon>Lactobacillales</taxon>
        <taxon>Streptococcaceae</taxon>
        <taxon>Streptococcus</taxon>
    </lineage>
</organism>
<gene>
    <name type="primary">sepF</name>
    <name type="ordered locus">SP_1664</name>
</gene>
<proteinExistence type="evidence at protein level"/>
<keyword id="KW-0131">Cell cycle</keyword>
<keyword id="KW-0132">Cell division</keyword>
<keyword id="KW-0963">Cytoplasm</keyword>
<keyword id="KW-1185">Reference proteome</keyword>
<keyword id="KW-0717">Septation</keyword>
<protein>
    <recommendedName>
        <fullName>Cell division protein SepF</fullName>
    </recommendedName>
</protein>
<evidence type="ECO:0000250" key="1"/>
<evidence type="ECO:0000256" key="2">
    <source>
        <dbReference type="SAM" id="MobiDB-lite"/>
    </source>
</evidence>
<evidence type="ECO:0000269" key="3">
    <source>
    </source>
</evidence>
<evidence type="ECO:0000305" key="4"/>
<feature type="chain" id="PRO_0000334096" description="Cell division protein SepF">
    <location>
        <begin position="1"/>
        <end position="179"/>
    </location>
</feature>
<feature type="region of interest" description="Disordered" evidence="2">
    <location>
        <begin position="22"/>
        <end position="55"/>
    </location>
</feature>
<feature type="compositionally biased region" description="Polar residues" evidence="2">
    <location>
        <begin position="33"/>
        <end position="55"/>
    </location>
</feature>
<comment type="function">
    <text evidence="1 3">Cell division protein that is part of the divisome complex and is recruited early to the Z-ring. Probably stimulates Z-ring formation, perhaps through the cross-linking of FtsZ protofilaments. Its function overlaps with FtsA (By similarity).</text>
</comment>
<comment type="subunit">
    <text evidence="1">Homodimer. Interacts with FtsZ (By similarity).</text>
</comment>
<comment type="subcellular location">
    <subcellularLocation>
        <location evidence="1">Cytoplasm</location>
    </subcellularLocation>
    <text evidence="1">Localizes to the division site, in a FtsZ-dependent manner.</text>
</comment>
<comment type="similarity">
    <text evidence="4">Belongs to the SepF family.</text>
</comment>
<name>SEPF_STRPN</name>
<sequence>MSLKDRFDRFIDYFTEDEDSSLPYEKRDEPVFTSVNSSQEPALPMNQPSQSAGTKENNITRLHARQQELANQSQRATDKVIIDVRYPRKYEDATEIVDLLAGNESILIDFQYMTEVQARRCLDYLDGACHVLAGNLKKVASTMYLLTPVNVIVNVEDIRLPDEDQQGEFGFDMKRNRVR</sequence>
<reference key="1">
    <citation type="journal article" date="2001" name="Science">
        <title>Complete genome sequence of a virulent isolate of Streptococcus pneumoniae.</title>
        <authorList>
            <person name="Tettelin H."/>
            <person name="Nelson K.E."/>
            <person name="Paulsen I.T."/>
            <person name="Eisen J.A."/>
            <person name="Read T.D."/>
            <person name="Peterson S.N."/>
            <person name="Heidelberg J.F."/>
            <person name="DeBoy R.T."/>
            <person name="Haft D.H."/>
            <person name="Dodson R.J."/>
            <person name="Durkin A.S."/>
            <person name="Gwinn M.L."/>
            <person name="Kolonay J.F."/>
            <person name="Nelson W.C."/>
            <person name="Peterson J.D."/>
            <person name="Umayam L.A."/>
            <person name="White O."/>
            <person name="Salzberg S.L."/>
            <person name="Lewis M.R."/>
            <person name="Radune D."/>
            <person name="Holtzapple E.K."/>
            <person name="Khouri H.M."/>
            <person name="Wolf A.M."/>
            <person name="Utterback T.R."/>
            <person name="Hansen C.L."/>
            <person name="McDonald L.A."/>
            <person name="Feldblyum T.V."/>
            <person name="Angiuoli S.V."/>
            <person name="Dickinson T."/>
            <person name="Hickey E.K."/>
            <person name="Holt I.E."/>
            <person name="Loftus B.J."/>
            <person name="Yang F."/>
            <person name="Smith H.O."/>
            <person name="Venter J.C."/>
            <person name="Dougherty B.A."/>
            <person name="Morrison D.A."/>
            <person name="Hollingshead S.K."/>
            <person name="Fraser C.M."/>
        </authorList>
    </citation>
    <scope>NUCLEOTIDE SEQUENCE [LARGE SCALE GENOMIC DNA]</scope>
    <source>
        <strain>ATCC BAA-334 / TIGR4</strain>
    </source>
</reference>
<reference key="2">
    <citation type="journal article" date="2003" name="J. Bacteriol.">
        <title>Characterization of divIVA and other genes located in the chromosomal region downstream of the dcw cluster in Streptococcus pneumoniae.</title>
        <authorList>
            <person name="Fadda D."/>
            <person name="Pischedda C."/>
            <person name="Caldara F."/>
            <person name="Whalen M.B."/>
            <person name="Anderluzzi D."/>
            <person name="Domenici E."/>
            <person name="Massidda O."/>
        </authorList>
    </citation>
    <scope>FUNCTION IN CELL DIVISION</scope>
    <source>
        <strain>Rx1</strain>
    </source>
</reference>
<dbReference type="EMBL" id="AE005672">
    <property type="protein sequence ID" value="AAK75743.1"/>
    <property type="molecule type" value="Genomic_DNA"/>
</dbReference>
<dbReference type="PIR" id="F95193">
    <property type="entry name" value="F95193"/>
</dbReference>
<dbReference type="RefSeq" id="WP_000053388.1">
    <property type="nucleotide sequence ID" value="NZ_CP155539.1"/>
</dbReference>
<dbReference type="SMR" id="P0CB77"/>
<dbReference type="PaxDb" id="170187-SP_1664"/>
<dbReference type="EnsemblBacteria" id="AAK75743">
    <property type="protein sequence ID" value="AAK75743"/>
    <property type="gene ID" value="SP_1664"/>
</dbReference>
<dbReference type="KEGG" id="spn:SP_1664"/>
<dbReference type="eggNOG" id="COG1799">
    <property type="taxonomic scope" value="Bacteria"/>
</dbReference>
<dbReference type="PhylomeDB" id="P0CB77"/>
<dbReference type="BioCyc" id="SPNE170187:G1FZB-1685-MONOMER"/>
<dbReference type="Proteomes" id="UP000000585">
    <property type="component" value="Chromosome"/>
</dbReference>
<dbReference type="GO" id="GO:0005737">
    <property type="term" value="C:cytoplasm"/>
    <property type="evidence" value="ECO:0007669"/>
    <property type="project" value="UniProtKB-SubCell"/>
</dbReference>
<dbReference type="GO" id="GO:0000917">
    <property type="term" value="P:division septum assembly"/>
    <property type="evidence" value="ECO:0007669"/>
    <property type="project" value="UniProtKB-KW"/>
</dbReference>
<dbReference type="GO" id="GO:0043093">
    <property type="term" value="P:FtsZ-dependent cytokinesis"/>
    <property type="evidence" value="ECO:0007669"/>
    <property type="project" value="UniProtKB-UniRule"/>
</dbReference>
<dbReference type="Gene3D" id="3.30.110.150">
    <property type="entry name" value="SepF-like protein"/>
    <property type="match status" value="1"/>
</dbReference>
<dbReference type="HAMAP" id="MF_01197">
    <property type="entry name" value="SepF"/>
    <property type="match status" value="1"/>
</dbReference>
<dbReference type="InterPro" id="IPR023052">
    <property type="entry name" value="Cell_div_SepF"/>
</dbReference>
<dbReference type="InterPro" id="IPR007561">
    <property type="entry name" value="Cell_div_SepF/SepF-rel"/>
</dbReference>
<dbReference type="InterPro" id="IPR038594">
    <property type="entry name" value="SepF-like_sf"/>
</dbReference>
<dbReference type="PANTHER" id="PTHR35798">
    <property type="entry name" value="CELL DIVISION PROTEIN SEPF"/>
    <property type="match status" value="1"/>
</dbReference>
<dbReference type="PANTHER" id="PTHR35798:SF1">
    <property type="entry name" value="CELL DIVISION PROTEIN SEPF"/>
    <property type="match status" value="1"/>
</dbReference>
<dbReference type="Pfam" id="PF04472">
    <property type="entry name" value="SepF"/>
    <property type="match status" value="1"/>
</dbReference>
<accession>P0CB77</accession>
<accession>Q7D493</accession>
<accession>Q9ZHB7</accession>